<keyword id="KW-0002">3D-structure</keyword>
<keyword id="KW-1015">Disulfide bond</keyword>
<keyword id="KW-0325">Glycoprotein</keyword>
<keyword id="KW-0472">Membrane</keyword>
<keyword id="KW-0675">Receptor</keyword>
<keyword id="KW-1185">Reference proteome</keyword>
<keyword id="KW-0677">Repeat</keyword>
<keyword id="KW-0732">Signal</keyword>
<keyword id="KW-0812">Transmembrane</keyword>
<keyword id="KW-1133">Transmembrane helix</keyword>
<dbReference type="EMBL" id="U23922">
    <property type="protein sequence ID" value="AAA87457.1"/>
    <property type="molecule type" value="mRNA"/>
</dbReference>
<dbReference type="EMBL" id="AK137577">
    <property type="protein sequence ID" value="BAE23414.1"/>
    <property type="molecule type" value="mRNA"/>
</dbReference>
<dbReference type="CCDS" id="CCDS22382.1"/>
<dbReference type="PIR" id="I49295">
    <property type="entry name" value="I49295"/>
</dbReference>
<dbReference type="RefSeq" id="NP_032379.2">
    <property type="nucleotide sequence ID" value="NM_008353.3"/>
</dbReference>
<dbReference type="PDB" id="8CR5">
    <property type="method" value="X-ray"/>
    <property type="resolution" value="2.15 A"/>
    <property type="chains" value="B=20-258"/>
</dbReference>
<dbReference type="PDB" id="8OE0">
    <property type="method" value="EM"/>
    <property type="resolution" value="4.60 A"/>
    <property type="chains" value="C=20-561"/>
</dbReference>
<dbReference type="PDB" id="8PB1">
    <property type="method" value="EM"/>
    <property type="resolution" value="3.50 A"/>
    <property type="chains" value="C=20-561"/>
</dbReference>
<dbReference type="PDBsum" id="8CR5"/>
<dbReference type="PDBsum" id="8OE0"/>
<dbReference type="PDBsum" id="8PB1"/>
<dbReference type="EMDB" id="EMD-16822"/>
<dbReference type="EMDB" id="EMD-16823"/>
<dbReference type="SMR" id="Q60837"/>
<dbReference type="BioGRID" id="200611">
    <property type="interactions" value="2"/>
</dbReference>
<dbReference type="ComplexPortal" id="CPX-388">
    <property type="entry name" value="Interleukin-12-receptor complex"/>
</dbReference>
<dbReference type="ComplexPortal" id="CPX-389">
    <property type="entry name" value="Interleukin-23-receptor complex"/>
</dbReference>
<dbReference type="FunCoup" id="Q60837">
    <property type="interactions" value="437"/>
</dbReference>
<dbReference type="IntAct" id="Q60837">
    <property type="interactions" value="1"/>
</dbReference>
<dbReference type="STRING" id="10090.ENSMUSP00000000808"/>
<dbReference type="GlyCosmos" id="Q60837">
    <property type="glycosylation" value="13 sites, No reported glycans"/>
</dbReference>
<dbReference type="GlyGen" id="Q60837">
    <property type="glycosylation" value="14 sites"/>
</dbReference>
<dbReference type="PhosphoSitePlus" id="Q60837"/>
<dbReference type="PaxDb" id="10090-ENSMUSP00000000808"/>
<dbReference type="ProteomicsDB" id="273069"/>
<dbReference type="Antibodypedia" id="14966">
    <property type="antibodies" value="518 antibodies from 39 providers"/>
</dbReference>
<dbReference type="DNASU" id="16161"/>
<dbReference type="Ensembl" id="ENSMUST00000000808.8">
    <property type="protein sequence ID" value="ENSMUSP00000000808.8"/>
    <property type="gene ID" value="ENSMUSG00000000791.10"/>
</dbReference>
<dbReference type="GeneID" id="16161"/>
<dbReference type="KEGG" id="mmu:16161"/>
<dbReference type="UCSC" id="uc009mbr.2">
    <property type="organism name" value="mouse"/>
</dbReference>
<dbReference type="AGR" id="MGI:104579"/>
<dbReference type="CTD" id="3594"/>
<dbReference type="MGI" id="MGI:104579">
    <property type="gene designation" value="Il12rb1"/>
</dbReference>
<dbReference type="VEuPathDB" id="HostDB:ENSMUSG00000000791"/>
<dbReference type="eggNOG" id="ENOG502S2KP">
    <property type="taxonomic scope" value="Eukaryota"/>
</dbReference>
<dbReference type="GeneTree" id="ENSGT00390000012431"/>
<dbReference type="HOGENOM" id="CLU_031440_0_0_1"/>
<dbReference type="InParanoid" id="Q60837"/>
<dbReference type="OMA" id="ECSWEYE"/>
<dbReference type="OrthoDB" id="8945484at2759"/>
<dbReference type="PhylomeDB" id="Q60837"/>
<dbReference type="TreeFam" id="TF338613"/>
<dbReference type="Reactome" id="R-MMU-9020591">
    <property type="pathway name" value="Interleukin-12 signaling"/>
</dbReference>
<dbReference type="Reactome" id="R-MMU-9020933">
    <property type="pathway name" value="Interleukin-23 signaling"/>
</dbReference>
<dbReference type="BioGRID-ORCS" id="16161">
    <property type="hits" value="5 hits in 79 CRISPR screens"/>
</dbReference>
<dbReference type="ChiTaRS" id="Il12rb1">
    <property type="organism name" value="mouse"/>
</dbReference>
<dbReference type="PRO" id="PR:Q60837"/>
<dbReference type="Proteomes" id="UP000000589">
    <property type="component" value="Chromosome 8"/>
</dbReference>
<dbReference type="RNAct" id="Q60837">
    <property type="molecule type" value="protein"/>
</dbReference>
<dbReference type="Bgee" id="ENSMUSG00000000791">
    <property type="expression patterns" value="Expressed in appendicular skeleton and 50 other cell types or tissues"/>
</dbReference>
<dbReference type="ExpressionAtlas" id="Q60837">
    <property type="expression patterns" value="baseline and differential"/>
</dbReference>
<dbReference type="GO" id="GO:0009897">
    <property type="term" value="C:external side of plasma membrane"/>
    <property type="evidence" value="ECO:0000314"/>
    <property type="project" value="MGI"/>
</dbReference>
<dbReference type="GO" id="GO:0072536">
    <property type="term" value="C:interleukin-23 receptor complex"/>
    <property type="evidence" value="ECO:0000314"/>
    <property type="project" value="BHF-UCL"/>
</dbReference>
<dbReference type="GO" id="GO:0005886">
    <property type="term" value="C:plasma membrane"/>
    <property type="evidence" value="ECO:0000304"/>
    <property type="project" value="Reactome"/>
</dbReference>
<dbReference type="CDD" id="cd00063">
    <property type="entry name" value="FN3"/>
    <property type="match status" value="1"/>
</dbReference>
<dbReference type="FunFam" id="2.60.40.10:FF:001717">
    <property type="entry name" value="Interleukin 12 receptor subunit beta 1"/>
    <property type="match status" value="1"/>
</dbReference>
<dbReference type="Gene3D" id="2.60.40.10">
    <property type="entry name" value="Immunoglobulins"/>
    <property type="match status" value="1"/>
</dbReference>
<dbReference type="InterPro" id="IPR003961">
    <property type="entry name" value="FN3_dom"/>
</dbReference>
<dbReference type="InterPro" id="IPR036116">
    <property type="entry name" value="FN3_sf"/>
</dbReference>
<dbReference type="InterPro" id="IPR013783">
    <property type="entry name" value="Ig-like_fold"/>
</dbReference>
<dbReference type="PANTHER" id="PTHR23037">
    <property type="entry name" value="CYTOKINE RECEPTOR"/>
    <property type="match status" value="1"/>
</dbReference>
<dbReference type="PANTHER" id="PTHR23037:SF28">
    <property type="entry name" value="ERYTHROPOIETIN RECEPTOR"/>
    <property type="match status" value="1"/>
</dbReference>
<dbReference type="Pfam" id="PF00041">
    <property type="entry name" value="fn3"/>
    <property type="match status" value="1"/>
</dbReference>
<dbReference type="SMART" id="SM00060">
    <property type="entry name" value="FN3"/>
    <property type="match status" value="1"/>
</dbReference>
<dbReference type="SUPFAM" id="SSF49265">
    <property type="entry name" value="Fibronectin type III"/>
    <property type="match status" value="1"/>
</dbReference>
<dbReference type="PROSITE" id="PS50853">
    <property type="entry name" value="FN3"/>
    <property type="match status" value="2"/>
</dbReference>
<proteinExistence type="evidence at protein level"/>
<name>I12R1_MOUSE</name>
<accession>Q60837</accession>
<accession>Q3UV59</accession>
<evidence type="ECO:0000250" key="1"/>
<evidence type="ECO:0000255" key="2"/>
<evidence type="ECO:0000255" key="3">
    <source>
        <dbReference type="PROSITE-ProRule" id="PRU00316"/>
    </source>
</evidence>
<evidence type="ECO:0000305" key="4"/>
<evidence type="ECO:0007829" key="5">
    <source>
        <dbReference type="PDB" id="8CR5"/>
    </source>
</evidence>
<evidence type="ECO:0007829" key="6">
    <source>
        <dbReference type="PDB" id="8PB1"/>
    </source>
</evidence>
<comment type="function">
    <text>Functions as an interleukin receptor which binds interleukin-12 with low affinity and is involved in IL12 transduction. Associated with IL12RB2 it forms a functional, high affinity receptor for IL12. Also associates with IL23R to form the interleukin-23 receptor which functions in IL23 signal transduction probably through activation of the Jak-Stat signaling cascade.</text>
</comment>
<comment type="subunit">
    <text evidence="1">Dimer or oligomer; disulfide-linked. Interacts with IL12RB2 to form the high affinity IL12 receptor. Heterodimer with IL23R; in presence of IL23. The heterodimer forms the IL23 receptor (By similarity).</text>
</comment>
<comment type="subcellular location">
    <subcellularLocation>
        <location>Membrane</location>
        <topology>Single-pass type I membrane protein</topology>
    </subcellularLocation>
</comment>
<comment type="domain">
    <text>The WSXWS motif appears to be necessary for proper protein folding and thereby efficient intracellular transport and cell-surface receptor binding.</text>
</comment>
<comment type="domain">
    <text>The box 1 motif is required for JAK interaction and/or activation.</text>
</comment>
<comment type="similarity">
    <text evidence="4">Belongs to the type I cytokine receptor family. Type 2 subfamily.</text>
</comment>
<organism>
    <name type="scientific">Mus musculus</name>
    <name type="common">Mouse</name>
    <dbReference type="NCBI Taxonomy" id="10090"/>
    <lineage>
        <taxon>Eukaryota</taxon>
        <taxon>Metazoa</taxon>
        <taxon>Chordata</taxon>
        <taxon>Craniata</taxon>
        <taxon>Vertebrata</taxon>
        <taxon>Euteleostomi</taxon>
        <taxon>Mammalia</taxon>
        <taxon>Eutheria</taxon>
        <taxon>Euarchontoglires</taxon>
        <taxon>Glires</taxon>
        <taxon>Rodentia</taxon>
        <taxon>Myomorpha</taxon>
        <taxon>Muroidea</taxon>
        <taxon>Muridae</taxon>
        <taxon>Murinae</taxon>
        <taxon>Mus</taxon>
        <taxon>Mus</taxon>
    </lineage>
</organism>
<feature type="signal peptide" evidence="2">
    <location>
        <begin position="1"/>
        <end position="19"/>
    </location>
</feature>
<feature type="chain" id="PRO_0000010918" description="Interleukin-12 receptor subunit beta-1">
    <location>
        <begin position="20"/>
        <end position="738"/>
    </location>
</feature>
<feature type="topological domain" description="Extracellular" evidence="2">
    <location>
        <begin position="20"/>
        <end position="565"/>
    </location>
</feature>
<feature type="transmembrane region" description="Helical" evidence="2">
    <location>
        <begin position="566"/>
        <end position="591"/>
    </location>
</feature>
<feature type="topological domain" description="Cytoplasmic" evidence="2">
    <location>
        <begin position="592"/>
        <end position="738"/>
    </location>
</feature>
<feature type="domain" description="Fibronectin type-III 1" evidence="3">
    <location>
        <begin position="47"/>
        <end position="152"/>
    </location>
</feature>
<feature type="domain" description="Fibronectin type-III 2" evidence="3">
    <location>
        <begin position="152"/>
        <end position="258"/>
    </location>
</feature>
<feature type="domain" description="Fibronectin type-III 3" evidence="3">
    <location>
        <begin position="259"/>
        <end position="359"/>
    </location>
</feature>
<feature type="domain" description="Fibronectin type-III 4" evidence="3">
    <location>
        <begin position="360"/>
        <end position="465"/>
    </location>
</feature>
<feature type="domain" description="Fibronectin type-III 5" evidence="3">
    <location>
        <begin position="469"/>
        <end position="565"/>
    </location>
</feature>
<feature type="short sequence motif" description="WSXWS motif">
    <location>
        <begin position="244"/>
        <end position="248"/>
    </location>
</feature>
<feature type="short sequence motif" description="Box 1 motif">
    <location>
        <begin position="598"/>
        <end position="606"/>
    </location>
</feature>
<feature type="glycosylation site" description="N-linked (GlcNAc...) asparagine" evidence="2">
    <location>
        <position position="50"/>
    </location>
</feature>
<feature type="glycosylation site" description="N-linked (GlcNAc...) asparagine" evidence="2">
    <location>
        <position position="73"/>
    </location>
</feature>
<feature type="glycosylation site" description="N-linked (GlcNAc...) asparagine" evidence="2">
    <location>
        <position position="86"/>
    </location>
</feature>
<feature type="glycosylation site" description="N-linked (GlcNAc...) asparagine" evidence="2">
    <location>
        <position position="130"/>
    </location>
</feature>
<feature type="glycosylation site" description="N-linked (GlcNAc...) asparagine" evidence="2">
    <location>
        <position position="144"/>
    </location>
</feature>
<feature type="glycosylation site" description="N-linked (GlcNAc...) asparagine" evidence="2">
    <location>
        <position position="169"/>
    </location>
</feature>
<feature type="glycosylation site" description="N-linked (GlcNAc...) asparagine" evidence="2">
    <location>
        <position position="188"/>
    </location>
</feature>
<feature type="glycosylation site" description="N-linked (GlcNAc...) asparagine" evidence="2">
    <location>
        <position position="330"/>
    </location>
</feature>
<feature type="glycosylation site" description="N-linked (GlcNAc...) asparagine" evidence="2">
    <location>
        <position position="368"/>
    </location>
</feature>
<feature type="glycosylation site" description="N-linked (GlcNAc...) asparagine" evidence="2">
    <location>
        <position position="374"/>
    </location>
</feature>
<feature type="glycosylation site" description="N-linked (GlcNAc...) asparagine" evidence="2">
    <location>
        <position position="401"/>
    </location>
</feature>
<feature type="glycosylation site" description="N-linked (GlcNAc...) asparagine" evidence="2">
    <location>
        <position position="463"/>
    </location>
</feature>
<feature type="glycosylation site" description="N-linked (GlcNAc...) asparagine" evidence="2">
    <location>
        <position position="477"/>
    </location>
</feature>
<feature type="disulfide bond" evidence="1">
    <location>
        <begin position="53"/>
        <end position="63"/>
    </location>
</feature>
<feature type="sequence conflict" description="In Ref. 1; AAA87457." evidence="4" ref="1">
    <original>A</original>
    <variation>P</variation>
    <location>
        <position position="7"/>
    </location>
</feature>
<feature type="sequence conflict" description="In Ref. 1; AAA87457." evidence="4" ref="1">
    <original>R</original>
    <variation>G</variation>
    <location>
        <position position="162"/>
    </location>
</feature>
<feature type="sequence conflict" description="In Ref. 1; AAA87457." evidence="4" ref="1">
    <original>R</original>
    <variation>C</variation>
    <location>
        <position position="209"/>
    </location>
</feature>
<feature type="strand" evidence="5">
    <location>
        <begin position="47"/>
        <end position="55"/>
    </location>
</feature>
<feature type="strand" evidence="5">
    <location>
        <begin position="57"/>
        <end position="69"/>
    </location>
</feature>
<feature type="strand" evidence="5">
    <location>
        <begin position="74"/>
        <end position="82"/>
    </location>
</feature>
<feature type="strand" evidence="5">
    <location>
        <begin position="94"/>
        <end position="101"/>
    </location>
</feature>
<feature type="strand" evidence="5">
    <location>
        <begin position="105"/>
        <end position="109"/>
    </location>
</feature>
<feature type="turn" evidence="6">
    <location>
        <begin position="110"/>
        <end position="113"/>
    </location>
</feature>
<feature type="strand" evidence="5">
    <location>
        <begin position="116"/>
        <end position="118"/>
    </location>
</feature>
<feature type="strand" evidence="5">
    <location>
        <begin position="120"/>
        <end position="128"/>
    </location>
</feature>
<feature type="strand" evidence="5">
    <location>
        <begin position="131"/>
        <end position="134"/>
    </location>
</feature>
<feature type="strand" evidence="5">
    <location>
        <begin position="138"/>
        <end position="140"/>
    </location>
</feature>
<feature type="strand" evidence="6">
    <location>
        <begin position="142"/>
        <end position="146"/>
    </location>
</feature>
<feature type="strand" evidence="6">
    <location>
        <begin position="156"/>
        <end position="160"/>
    </location>
</feature>
<feature type="strand" evidence="6">
    <location>
        <begin position="163"/>
        <end position="168"/>
    </location>
</feature>
<feature type="strand" evidence="6">
    <location>
        <begin position="179"/>
        <end position="183"/>
    </location>
</feature>
<feature type="strand" evidence="6">
    <location>
        <begin position="190"/>
        <end position="193"/>
    </location>
</feature>
<feature type="strand" evidence="6">
    <location>
        <begin position="214"/>
        <end position="219"/>
    </location>
</feature>
<feature type="strand" evidence="6">
    <location>
        <begin position="225"/>
        <end position="230"/>
    </location>
</feature>
<feature type="strand" evidence="6">
    <location>
        <begin position="251"/>
        <end position="253"/>
    </location>
</feature>
<protein>
    <recommendedName>
        <fullName>Interleukin-12 receptor subunit beta-1</fullName>
        <shortName>IL-12 receptor subunit beta-1</shortName>
        <shortName>IL-12R subunit beta-1</shortName>
        <shortName>IL-12R-beta-1</shortName>
    </recommendedName>
    <alternativeName>
        <fullName>IL-12 receptor beta component</fullName>
    </alternativeName>
    <cdAntigenName>CD212</cdAntigenName>
</protein>
<sequence length="738" mass="81788">MDMMGLAGTSKHITFLLLCQLGASGPGDGCCVEKTSFPEGASGSPLGPRNLSCYRVSKTDYECSWQYDGPEDNVSHVLWCCFVPPNHTHTGQERCRYFSSGPDRTVQFWEQDGIPVLSKVNFWVESRLGNRTMKSQKISQYLYNWTKTTPPLGHIKVSQSHRQLRMDWNVSEEAGAEVQFRRRMPTTNWTLGDCGPQVNSGSGVLGDIRGSMSESCLCPSENMAQEIQIRRRRRLSSGAPGGPWSDWSMPVCVPPEVLPQAKIKFLVEPLNQGGRRRLTMQGQSPQLAVPEGCRGRPGAQVKKHLVLVRMLSCRCQAQTSKTVPLGKKLNLSGATYDLNVLAKTRFGRSTIQKWHLPAQELTETRALNVSVGGNMTSMQWAAQAPGTTYCLEWQPWFQHRNHTHCTLIVPEEEDPAKMVTHSWSSKPTLEQEECYRITVFASKNPKNPMLWATVLSSYYFGGNASRAGTPRHVSVRNQTGDSVSVEWTASQLSTCPGVLTQYVVRCEAEDGAWESEWLVPPTKTQVTLDGLRSRVMYKVQVRADTARLPGAWSHPQRFSFEVQISRLSIIFASLGSFASVLLVGSLGYIGLNRAAWHLCPPLPTPCGSTAVEFPGSQGKQAWQWCNPEDFPEVLYPRDALVVEMPGDRGDGTESPQAAPECALDTRRPLETQRQRQVQALSEARRLGLAREDCPRGDLAHVTLPLLLGGVTQGASVLDDLWRTHKTAEPGPPTLGQEA</sequence>
<reference key="1">
    <citation type="journal article" date="1995" name="J. Immunol.">
        <title>Cloning and characterization of a mouse IL-12 receptor-beta component.</title>
        <authorList>
            <person name="Chua A.O."/>
            <person name="Wilkinson V.L."/>
            <person name="Presky D.H."/>
            <person name="Gubler U."/>
        </authorList>
    </citation>
    <scope>NUCLEOTIDE SEQUENCE [MRNA]</scope>
    <source>
        <strain>BALB/cJ</strain>
    </source>
</reference>
<reference key="2">
    <citation type="journal article" date="2005" name="Science">
        <title>The transcriptional landscape of the mammalian genome.</title>
        <authorList>
            <person name="Carninci P."/>
            <person name="Kasukawa T."/>
            <person name="Katayama S."/>
            <person name="Gough J."/>
            <person name="Frith M.C."/>
            <person name="Maeda N."/>
            <person name="Oyama R."/>
            <person name="Ravasi T."/>
            <person name="Lenhard B."/>
            <person name="Wells C."/>
            <person name="Kodzius R."/>
            <person name="Shimokawa K."/>
            <person name="Bajic V.B."/>
            <person name="Brenner S.E."/>
            <person name="Batalov S."/>
            <person name="Forrest A.R."/>
            <person name="Zavolan M."/>
            <person name="Davis M.J."/>
            <person name="Wilming L.G."/>
            <person name="Aidinis V."/>
            <person name="Allen J.E."/>
            <person name="Ambesi-Impiombato A."/>
            <person name="Apweiler R."/>
            <person name="Aturaliya R.N."/>
            <person name="Bailey T.L."/>
            <person name="Bansal M."/>
            <person name="Baxter L."/>
            <person name="Beisel K.W."/>
            <person name="Bersano T."/>
            <person name="Bono H."/>
            <person name="Chalk A.M."/>
            <person name="Chiu K.P."/>
            <person name="Choudhary V."/>
            <person name="Christoffels A."/>
            <person name="Clutterbuck D.R."/>
            <person name="Crowe M.L."/>
            <person name="Dalla E."/>
            <person name="Dalrymple B.P."/>
            <person name="de Bono B."/>
            <person name="Della Gatta G."/>
            <person name="di Bernardo D."/>
            <person name="Down T."/>
            <person name="Engstrom P."/>
            <person name="Fagiolini M."/>
            <person name="Faulkner G."/>
            <person name="Fletcher C.F."/>
            <person name="Fukushima T."/>
            <person name="Furuno M."/>
            <person name="Futaki S."/>
            <person name="Gariboldi M."/>
            <person name="Georgii-Hemming P."/>
            <person name="Gingeras T.R."/>
            <person name="Gojobori T."/>
            <person name="Green R.E."/>
            <person name="Gustincich S."/>
            <person name="Harbers M."/>
            <person name="Hayashi Y."/>
            <person name="Hensch T.K."/>
            <person name="Hirokawa N."/>
            <person name="Hill D."/>
            <person name="Huminiecki L."/>
            <person name="Iacono M."/>
            <person name="Ikeo K."/>
            <person name="Iwama A."/>
            <person name="Ishikawa T."/>
            <person name="Jakt M."/>
            <person name="Kanapin A."/>
            <person name="Katoh M."/>
            <person name="Kawasawa Y."/>
            <person name="Kelso J."/>
            <person name="Kitamura H."/>
            <person name="Kitano H."/>
            <person name="Kollias G."/>
            <person name="Krishnan S.P."/>
            <person name="Kruger A."/>
            <person name="Kummerfeld S.K."/>
            <person name="Kurochkin I.V."/>
            <person name="Lareau L.F."/>
            <person name="Lazarevic D."/>
            <person name="Lipovich L."/>
            <person name="Liu J."/>
            <person name="Liuni S."/>
            <person name="McWilliam S."/>
            <person name="Madan Babu M."/>
            <person name="Madera M."/>
            <person name="Marchionni L."/>
            <person name="Matsuda H."/>
            <person name="Matsuzawa S."/>
            <person name="Miki H."/>
            <person name="Mignone F."/>
            <person name="Miyake S."/>
            <person name="Morris K."/>
            <person name="Mottagui-Tabar S."/>
            <person name="Mulder N."/>
            <person name="Nakano N."/>
            <person name="Nakauchi H."/>
            <person name="Ng P."/>
            <person name="Nilsson R."/>
            <person name="Nishiguchi S."/>
            <person name="Nishikawa S."/>
            <person name="Nori F."/>
            <person name="Ohara O."/>
            <person name="Okazaki Y."/>
            <person name="Orlando V."/>
            <person name="Pang K.C."/>
            <person name="Pavan W.J."/>
            <person name="Pavesi G."/>
            <person name="Pesole G."/>
            <person name="Petrovsky N."/>
            <person name="Piazza S."/>
            <person name="Reed J."/>
            <person name="Reid J.F."/>
            <person name="Ring B.Z."/>
            <person name="Ringwald M."/>
            <person name="Rost B."/>
            <person name="Ruan Y."/>
            <person name="Salzberg S.L."/>
            <person name="Sandelin A."/>
            <person name="Schneider C."/>
            <person name="Schoenbach C."/>
            <person name="Sekiguchi K."/>
            <person name="Semple C.A."/>
            <person name="Seno S."/>
            <person name="Sessa L."/>
            <person name="Sheng Y."/>
            <person name="Shibata Y."/>
            <person name="Shimada H."/>
            <person name="Shimada K."/>
            <person name="Silva D."/>
            <person name="Sinclair B."/>
            <person name="Sperling S."/>
            <person name="Stupka E."/>
            <person name="Sugiura K."/>
            <person name="Sultana R."/>
            <person name="Takenaka Y."/>
            <person name="Taki K."/>
            <person name="Tammoja K."/>
            <person name="Tan S.L."/>
            <person name="Tang S."/>
            <person name="Taylor M.S."/>
            <person name="Tegner J."/>
            <person name="Teichmann S.A."/>
            <person name="Ueda H.R."/>
            <person name="van Nimwegen E."/>
            <person name="Verardo R."/>
            <person name="Wei C.L."/>
            <person name="Yagi K."/>
            <person name="Yamanishi H."/>
            <person name="Zabarovsky E."/>
            <person name="Zhu S."/>
            <person name="Zimmer A."/>
            <person name="Hide W."/>
            <person name="Bult C."/>
            <person name="Grimmond S.M."/>
            <person name="Teasdale R.D."/>
            <person name="Liu E.T."/>
            <person name="Brusic V."/>
            <person name="Quackenbush J."/>
            <person name="Wahlestedt C."/>
            <person name="Mattick J.S."/>
            <person name="Hume D.A."/>
            <person name="Kai C."/>
            <person name="Sasaki D."/>
            <person name="Tomaru Y."/>
            <person name="Fukuda S."/>
            <person name="Kanamori-Katayama M."/>
            <person name="Suzuki M."/>
            <person name="Aoki J."/>
            <person name="Arakawa T."/>
            <person name="Iida J."/>
            <person name="Imamura K."/>
            <person name="Itoh M."/>
            <person name="Kato T."/>
            <person name="Kawaji H."/>
            <person name="Kawagashira N."/>
            <person name="Kawashima T."/>
            <person name="Kojima M."/>
            <person name="Kondo S."/>
            <person name="Konno H."/>
            <person name="Nakano K."/>
            <person name="Ninomiya N."/>
            <person name="Nishio T."/>
            <person name="Okada M."/>
            <person name="Plessy C."/>
            <person name="Shibata K."/>
            <person name="Shiraki T."/>
            <person name="Suzuki S."/>
            <person name="Tagami M."/>
            <person name="Waki K."/>
            <person name="Watahiki A."/>
            <person name="Okamura-Oho Y."/>
            <person name="Suzuki H."/>
            <person name="Kawai J."/>
            <person name="Hayashizaki Y."/>
        </authorList>
    </citation>
    <scope>NUCLEOTIDE SEQUENCE [LARGE SCALE MRNA]</scope>
    <source>
        <strain>C57BL/6J</strain>
        <tissue>Bone</tissue>
    </source>
</reference>
<reference key="3">
    <citation type="journal article" date="1996" name="Proc. Natl. Acad. Sci. U.S.A.">
        <title>A functional interleukin 12 receptor complex is composed of two beta-type cytokine receptor subunits.</title>
        <authorList>
            <person name="Presky D.H."/>
            <person name="Yang H."/>
            <person name="Minetti L.J."/>
            <person name="Chua A.O."/>
            <person name="Nabavi N."/>
            <person name="Wu C.-Y."/>
            <person name="Gately M.K."/>
            <person name="Gubler U."/>
        </authorList>
    </citation>
    <scope>SUBUNIT</scope>
</reference>
<gene>
    <name type="primary">Il12rb1</name>
    <name type="synonym">Il12rb</name>
</gene>